<evidence type="ECO:0000255" key="1">
    <source>
        <dbReference type="HAMAP-Rule" id="MF_01576"/>
    </source>
</evidence>
<dbReference type="EC" id="1.5.1.5" evidence="1"/>
<dbReference type="EC" id="3.5.4.9" evidence="1"/>
<dbReference type="EMBL" id="CU928160">
    <property type="protein sequence ID" value="CAQ97403.1"/>
    <property type="molecule type" value="Genomic_DNA"/>
</dbReference>
<dbReference type="RefSeq" id="WP_000729160.1">
    <property type="nucleotide sequence ID" value="NC_011741.1"/>
</dbReference>
<dbReference type="SMR" id="B7M4N2"/>
<dbReference type="KEGG" id="ecr:ECIAI1_0531"/>
<dbReference type="HOGENOM" id="CLU_034045_2_1_6"/>
<dbReference type="UniPathway" id="UPA00193"/>
<dbReference type="GO" id="GO:0005829">
    <property type="term" value="C:cytosol"/>
    <property type="evidence" value="ECO:0007669"/>
    <property type="project" value="TreeGrafter"/>
</dbReference>
<dbReference type="GO" id="GO:0004477">
    <property type="term" value="F:methenyltetrahydrofolate cyclohydrolase activity"/>
    <property type="evidence" value="ECO:0007669"/>
    <property type="project" value="UniProtKB-UniRule"/>
</dbReference>
<dbReference type="GO" id="GO:0004488">
    <property type="term" value="F:methylenetetrahydrofolate dehydrogenase (NADP+) activity"/>
    <property type="evidence" value="ECO:0007669"/>
    <property type="project" value="UniProtKB-UniRule"/>
</dbReference>
<dbReference type="GO" id="GO:0000105">
    <property type="term" value="P:L-histidine biosynthetic process"/>
    <property type="evidence" value="ECO:0007669"/>
    <property type="project" value="UniProtKB-KW"/>
</dbReference>
<dbReference type="GO" id="GO:0009086">
    <property type="term" value="P:methionine biosynthetic process"/>
    <property type="evidence" value="ECO:0007669"/>
    <property type="project" value="UniProtKB-KW"/>
</dbReference>
<dbReference type="GO" id="GO:0006164">
    <property type="term" value="P:purine nucleotide biosynthetic process"/>
    <property type="evidence" value="ECO:0007669"/>
    <property type="project" value="UniProtKB-KW"/>
</dbReference>
<dbReference type="GO" id="GO:0035999">
    <property type="term" value="P:tetrahydrofolate interconversion"/>
    <property type="evidence" value="ECO:0007669"/>
    <property type="project" value="UniProtKB-UniRule"/>
</dbReference>
<dbReference type="CDD" id="cd01080">
    <property type="entry name" value="NAD_bind_m-THF_DH_Cyclohyd"/>
    <property type="match status" value="1"/>
</dbReference>
<dbReference type="FunFam" id="3.40.50.10860:FF:000001">
    <property type="entry name" value="Bifunctional protein FolD"/>
    <property type="match status" value="1"/>
</dbReference>
<dbReference type="FunFam" id="3.40.50.720:FF:000006">
    <property type="entry name" value="Bifunctional protein FolD"/>
    <property type="match status" value="1"/>
</dbReference>
<dbReference type="Gene3D" id="3.40.50.10860">
    <property type="entry name" value="Leucine Dehydrogenase, chain A, domain 1"/>
    <property type="match status" value="1"/>
</dbReference>
<dbReference type="Gene3D" id="3.40.50.720">
    <property type="entry name" value="NAD(P)-binding Rossmann-like Domain"/>
    <property type="match status" value="1"/>
</dbReference>
<dbReference type="HAMAP" id="MF_01576">
    <property type="entry name" value="THF_DHG_CYH"/>
    <property type="match status" value="1"/>
</dbReference>
<dbReference type="InterPro" id="IPR046346">
    <property type="entry name" value="Aminoacid_DH-like_N_sf"/>
</dbReference>
<dbReference type="InterPro" id="IPR036291">
    <property type="entry name" value="NAD(P)-bd_dom_sf"/>
</dbReference>
<dbReference type="InterPro" id="IPR000672">
    <property type="entry name" value="THF_DH/CycHdrlase"/>
</dbReference>
<dbReference type="InterPro" id="IPR020630">
    <property type="entry name" value="THF_DH/CycHdrlase_cat_dom"/>
</dbReference>
<dbReference type="InterPro" id="IPR020867">
    <property type="entry name" value="THF_DH/CycHdrlase_CS"/>
</dbReference>
<dbReference type="InterPro" id="IPR020631">
    <property type="entry name" value="THF_DH/CycHdrlase_NAD-bd_dom"/>
</dbReference>
<dbReference type="NCBIfam" id="NF008058">
    <property type="entry name" value="PRK10792.1"/>
    <property type="match status" value="1"/>
</dbReference>
<dbReference type="NCBIfam" id="NF010783">
    <property type="entry name" value="PRK14186.1"/>
    <property type="match status" value="1"/>
</dbReference>
<dbReference type="PANTHER" id="PTHR48099:SF5">
    <property type="entry name" value="C-1-TETRAHYDROFOLATE SYNTHASE, CYTOPLASMIC"/>
    <property type="match status" value="1"/>
</dbReference>
<dbReference type="PANTHER" id="PTHR48099">
    <property type="entry name" value="C-1-TETRAHYDROFOLATE SYNTHASE, CYTOPLASMIC-RELATED"/>
    <property type="match status" value="1"/>
</dbReference>
<dbReference type="Pfam" id="PF00763">
    <property type="entry name" value="THF_DHG_CYH"/>
    <property type="match status" value="1"/>
</dbReference>
<dbReference type="Pfam" id="PF02882">
    <property type="entry name" value="THF_DHG_CYH_C"/>
    <property type="match status" value="1"/>
</dbReference>
<dbReference type="PRINTS" id="PR00085">
    <property type="entry name" value="THFDHDRGNASE"/>
</dbReference>
<dbReference type="SUPFAM" id="SSF53223">
    <property type="entry name" value="Aminoacid dehydrogenase-like, N-terminal domain"/>
    <property type="match status" value="1"/>
</dbReference>
<dbReference type="SUPFAM" id="SSF51735">
    <property type="entry name" value="NAD(P)-binding Rossmann-fold domains"/>
    <property type="match status" value="1"/>
</dbReference>
<dbReference type="PROSITE" id="PS00766">
    <property type="entry name" value="THF_DHG_CYH_1"/>
    <property type="match status" value="1"/>
</dbReference>
<dbReference type="PROSITE" id="PS00767">
    <property type="entry name" value="THF_DHG_CYH_2"/>
    <property type="match status" value="1"/>
</dbReference>
<comment type="function">
    <text evidence="1">Catalyzes the oxidation of 5,10-methylenetetrahydrofolate to 5,10-methenyltetrahydrofolate and then the hydrolysis of 5,10-methenyltetrahydrofolate to 10-formyltetrahydrofolate.</text>
</comment>
<comment type="catalytic activity">
    <reaction evidence="1">
        <text>(6R)-5,10-methylene-5,6,7,8-tetrahydrofolate + NADP(+) = (6R)-5,10-methenyltetrahydrofolate + NADPH</text>
        <dbReference type="Rhea" id="RHEA:22812"/>
        <dbReference type="ChEBI" id="CHEBI:15636"/>
        <dbReference type="ChEBI" id="CHEBI:57455"/>
        <dbReference type="ChEBI" id="CHEBI:57783"/>
        <dbReference type="ChEBI" id="CHEBI:58349"/>
        <dbReference type="EC" id="1.5.1.5"/>
    </reaction>
</comment>
<comment type="catalytic activity">
    <reaction evidence="1">
        <text>(6R)-5,10-methenyltetrahydrofolate + H2O = (6R)-10-formyltetrahydrofolate + H(+)</text>
        <dbReference type="Rhea" id="RHEA:23700"/>
        <dbReference type="ChEBI" id="CHEBI:15377"/>
        <dbReference type="ChEBI" id="CHEBI:15378"/>
        <dbReference type="ChEBI" id="CHEBI:57455"/>
        <dbReference type="ChEBI" id="CHEBI:195366"/>
        <dbReference type="EC" id="3.5.4.9"/>
    </reaction>
</comment>
<comment type="pathway">
    <text evidence="1">One-carbon metabolism; tetrahydrofolate interconversion.</text>
</comment>
<comment type="subunit">
    <text evidence="1">Homodimer.</text>
</comment>
<comment type="similarity">
    <text evidence="1">Belongs to the tetrahydrofolate dehydrogenase/cyclohydrolase family.</text>
</comment>
<gene>
    <name evidence="1" type="primary">folD</name>
    <name type="ordered locus">ECIAI1_0531</name>
</gene>
<proteinExistence type="inferred from homology"/>
<organism>
    <name type="scientific">Escherichia coli O8 (strain IAI1)</name>
    <dbReference type="NCBI Taxonomy" id="585034"/>
    <lineage>
        <taxon>Bacteria</taxon>
        <taxon>Pseudomonadati</taxon>
        <taxon>Pseudomonadota</taxon>
        <taxon>Gammaproteobacteria</taxon>
        <taxon>Enterobacterales</taxon>
        <taxon>Enterobacteriaceae</taxon>
        <taxon>Escherichia</taxon>
    </lineage>
</organism>
<keyword id="KW-0028">Amino-acid biosynthesis</keyword>
<keyword id="KW-0368">Histidine biosynthesis</keyword>
<keyword id="KW-0378">Hydrolase</keyword>
<keyword id="KW-0486">Methionine biosynthesis</keyword>
<keyword id="KW-0511">Multifunctional enzyme</keyword>
<keyword id="KW-0521">NADP</keyword>
<keyword id="KW-0554">One-carbon metabolism</keyword>
<keyword id="KW-0560">Oxidoreductase</keyword>
<keyword id="KW-0658">Purine biosynthesis</keyword>
<accession>B7M4N2</accession>
<reference key="1">
    <citation type="journal article" date="2009" name="PLoS Genet.">
        <title>Organised genome dynamics in the Escherichia coli species results in highly diverse adaptive paths.</title>
        <authorList>
            <person name="Touchon M."/>
            <person name="Hoede C."/>
            <person name="Tenaillon O."/>
            <person name="Barbe V."/>
            <person name="Baeriswyl S."/>
            <person name="Bidet P."/>
            <person name="Bingen E."/>
            <person name="Bonacorsi S."/>
            <person name="Bouchier C."/>
            <person name="Bouvet O."/>
            <person name="Calteau A."/>
            <person name="Chiapello H."/>
            <person name="Clermont O."/>
            <person name="Cruveiller S."/>
            <person name="Danchin A."/>
            <person name="Diard M."/>
            <person name="Dossat C."/>
            <person name="Karoui M.E."/>
            <person name="Frapy E."/>
            <person name="Garry L."/>
            <person name="Ghigo J.M."/>
            <person name="Gilles A.M."/>
            <person name="Johnson J."/>
            <person name="Le Bouguenec C."/>
            <person name="Lescat M."/>
            <person name="Mangenot S."/>
            <person name="Martinez-Jehanne V."/>
            <person name="Matic I."/>
            <person name="Nassif X."/>
            <person name="Oztas S."/>
            <person name="Petit M.A."/>
            <person name="Pichon C."/>
            <person name="Rouy Z."/>
            <person name="Ruf C.S."/>
            <person name="Schneider D."/>
            <person name="Tourret J."/>
            <person name="Vacherie B."/>
            <person name="Vallenet D."/>
            <person name="Medigue C."/>
            <person name="Rocha E.P.C."/>
            <person name="Denamur E."/>
        </authorList>
    </citation>
    <scope>NUCLEOTIDE SEQUENCE [LARGE SCALE GENOMIC DNA]</scope>
    <source>
        <strain>IAI1</strain>
    </source>
</reference>
<feature type="chain" id="PRO_1000196778" description="Bifunctional protein FolD">
    <location>
        <begin position="1"/>
        <end position="288"/>
    </location>
</feature>
<feature type="binding site" evidence="1">
    <location>
        <begin position="166"/>
        <end position="168"/>
    </location>
    <ligand>
        <name>NADP(+)</name>
        <dbReference type="ChEBI" id="CHEBI:58349"/>
    </ligand>
</feature>
<feature type="binding site" evidence="1">
    <location>
        <position position="232"/>
    </location>
    <ligand>
        <name>NADP(+)</name>
        <dbReference type="ChEBI" id="CHEBI:58349"/>
    </ligand>
</feature>
<sequence>MAAKIIDGKTIAQQVRSEVAQKVQARIAAGLRAPGLAVVLVGSNPASQIYVASKRKACEEVGFVSRSYDLPETTSEAELLELIDTLNADNTIDGILVQLPLPAGIDNVKVLERIHPDKDVDGFHPYNVGRLCQRAPRLRPCTPRGIVTLLERYNIDTFGLNAVVIGASNIVGRPMSMELLLAGCTTTVTHRFTKNLRHHVENADLLIVAVGKPGFIPGDWIKEGAIVIDVGINRLENGKVVGDVVFEDAAKRASYITPVPGGVGPMTVATLIENTLQACVEYHDPQDE</sequence>
<protein>
    <recommendedName>
        <fullName evidence="1">Bifunctional protein FolD</fullName>
    </recommendedName>
    <domain>
        <recommendedName>
            <fullName evidence="1">Methylenetetrahydrofolate dehydrogenase</fullName>
            <ecNumber evidence="1">1.5.1.5</ecNumber>
        </recommendedName>
    </domain>
    <domain>
        <recommendedName>
            <fullName evidence="1">Methenyltetrahydrofolate cyclohydrolase</fullName>
            <ecNumber evidence="1">3.5.4.9</ecNumber>
        </recommendedName>
    </domain>
</protein>
<name>FOLD_ECO8A</name>